<sequence length="22" mass="2434">EXSEQNPNILEIKPGDTVKVXT</sequence>
<reference key="1">
    <citation type="journal article" date="2003" name="J. Bacteriol.">
        <title>Characterization of the chlorate reductase from Pseudomonas chloritidismutans.</title>
        <authorList>
            <person name="Wolterink A.F.W.M."/>
            <person name="Schiltz E."/>
            <person name="Hagedoorn P.-L."/>
            <person name="Hagen W.R."/>
            <person name="Kengen S.W.M."/>
            <person name="Stams A.J.M."/>
        </authorList>
    </citation>
    <scope>PROTEIN SEQUENCE</scope>
    <scope>SUBUNIT</scope>
    <scope>SUBCELLULAR LOCATION</scope>
</reference>
<comment type="function">
    <text evidence="1">May transfer electrons to the iron-sulfur centers of the beta subunit of chlorate reductase.</text>
</comment>
<comment type="cofactor">
    <cofactor evidence="4">
        <name>heme b</name>
        <dbReference type="ChEBI" id="CHEBI:60344"/>
    </cofactor>
    <text evidence="4">Binds 1 heme b (iron(II)-protoporphyrin IX) group per subunit.</text>
</comment>
<comment type="biophysicochemical properties">
    <kinetics>
        <KM>159 uM for chlorate</KM>
        <Vmax>51.0 umol/min/mg enzyme</Vmax>
    </kinetics>
    <phDependence>
        <text>Optimum pH is 7.5.</text>
    </phDependence>
</comment>
<comment type="subunit">
    <text evidence="3">Heterotrimer of alpha, beta and gamma subunits.</text>
</comment>
<comment type="subcellular location">
    <subcellularLocation>
        <location evidence="3">Cytoplasm</location>
    </subcellularLocation>
</comment>
<organism>
    <name type="scientific">Stutzerimonas chloritidismutans</name>
    <name type="common">Pseudomonas chloritidismutans</name>
    <dbReference type="NCBI Taxonomy" id="203192"/>
    <lineage>
        <taxon>Bacteria</taxon>
        <taxon>Pseudomonadati</taxon>
        <taxon>Pseudomonadota</taxon>
        <taxon>Gammaproteobacteria</taxon>
        <taxon>Pseudomonadales</taxon>
        <taxon>Pseudomonadaceae</taxon>
        <taxon>Stutzerimonas</taxon>
    </lineage>
</organism>
<name>CLRG_STUCH</name>
<dbReference type="BRENDA" id="1.97.1.1">
    <property type="organism ID" value="7803"/>
</dbReference>
<dbReference type="GO" id="GO:0005737">
    <property type="term" value="C:cytoplasm"/>
    <property type="evidence" value="ECO:0007669"/>
    <property type="project" value="UniProtKB-SubCell"/>
</dbReference>
<dbReference type="GO" id="GO:0046872">
    <property type="term" value="F:metal ion binding"/>
    <property type="evidence" value="ECO:0007669"/>
    <property type="project" value="UniProtKB-KW"/>
</dbReference>
<protein>
    <recommendedName>
        <fullName>Chlorate reductase subunit gamma</fullName>
    </recommendedName>
    <alternativeName>
        <fullName>Chlorate reductase heme subunit</fullName>
    </alternativeName>
</protein>
<keyword id="KW-0963">Cytoplasm</keyword>
<keyword id="KW-0903">Direct protein sequencing</keyword>
<keyword id="KW-0249">Electron transport</keyword>
<keyword id="KW-0349">Heme</keyword>
<keyword id="KW-0408">Iron</keyword>
<keyword id="KW-0479">Metal-binding</keyword>
<keyword id="KW-0813">Transport</keyword>
<proteinExistence type="evidence at protein level"/>
<accession>P83450</accession>
<evidence type="ECO:0000250" key="1"/>
<evidence type="ECO:0000256" key="2">
    <source>
        <dbReference type="SAM" id="MobiDB-lite"/>
    </source>
</evidence>
<evidence type="ECO:0000269" key="3">
    <source>
    </source>
</evidence>
<evidence type="ECO:0000305" key="4"/>
<feature type="chain" id="PRO_0000089873" description="Chlorate reductase subunit gamma">
    <location>
        <begin position="1"/>
        <end position="22" status="greater than"/>
    </location>
</feature>
<feature type="region of interest" description="Disordered" evidence="2">
    <location>
        <begin position="1"/>
        <end position="22"/>
    </location>
</feature>
<feature type="non-terminal residue">
    <location>
        <position position="22"/>
    </location>
</feature>